<feature type="chain" id="PRO_0000215856" description="Cysteine protease ATG4D">
    <location>
        <begin position="1"/>
        <end position="469"/>
    </location>
</feature>
<feature type="region of interest" description="Disordered" evidence="3">
    <location>
        <begin position="1"/>
        <end position="41"/>
    </location>
</feature>
<feature type="region of interest" description="Disordered" evidence="3">
    <location>
        <begin position="169"/>
        <end position="191"/>
    </location>
</feature>
<feature type="region of interest" description="Disordered" evidence="3">
    <location>
        <begin position="436"/>
        <end position="469"/>
    </location>
</feature>
<feature type="compositionally biased region" description="Polar residues" evidence="3">
    <location>
        <begin position="1"/>
        <end position="29"/>
    </location>
</feature>
<feature type="compositionally biased region" description="Low complexity" evidence="3">
    <location>
        <begin position="171"/>
        <end position="182"/>
    </location>
</feature>
<feature type="active site" description="Nucleophile" evidence="2">
    <location>
        <position position="131"/>
    </location>
</feature>
<feature type="active site" evidence="2">
    <location>
        <position position="356"/>
    </location>
</feature>
<feature type="active site" evidence="2">
    <location>
        <position position="358"/>
    </location>
</feature>
<sequence>MNSVSPLATQYGSPKGSQQMENRSTQSGGHEQRKMGHQDATLDGEADEVDKLKSKLLSAWNNVKYGWSVKMKTTFSRSAPVYLLGERYFFRLDDEIERFQKDFVSRVWLTYRRDFPALEGTALTTDCGWGCMIRSGQMLLAQGLLLHLLSREWTWSEALYRHFVEMEPIRSSSPPSMPLSSLATGHSAGDYQPHTQCSGAPHGDQVHRNIMRWFSDHPGSPFGLHQLVTLGSIFGKKAGDWYGPSIVAHIIKKAIETSSEVPELSVYVSQDCTVYKADIEQLFAGDVPHAETSRGAGKAVIILVPVRLGGETFNPVYKHCLKEFLRMPSCLGIIGGKPKHSLYFIGYQDNYLLYLDPHYCQPYIDTSKNDFPLESFHCNSPRKISITRMDPSCTFAFYAKNSEDFGKLCDHLMKVLHSPRAEEKYPIFSISEGQAQEYAEGPQSSSHPPVCRKKGPLVKRPSSDEFEFL</sequence>
<comment type="function">
    <text evidence="1 2">Cysteine protease that plays a key role in autophagy by mediating both proteolytic activation and delipidation of ATG8 family proteins (By similarity). The protease activity is required for proteolytic activation of ATG8 family proteins to reveal a C-terminal glycine (By similarity). Exposure of the glycine at the C-terminus is essential for ATG8 proteins conjugation to phosphatidylethanolamine (PE) and insertion to membranes, which is necessary for autophagy (By similarity). In addition to the protease activity, also mediates delipidation of ATG8 family proteins. Catalyzes delipidation of PE-conjugated forms of ATG8 proteins during macroautophagy (By similarity). Also involved in non-canonical autophagy, a parallel pathway involving conjugation of ATG8 proteins to single membranes at endolysosomal compartments, by catalyzing delipidation of ATG8 proteins conjugated to phosphatidylserine (PS) (By similarity).</text>
</comment>
<comment type="catalytic activity">
    <reaction evidence="1">
        <text>[protein]-C-terminal L-amino acid-glycyl-phosphatidylethanolamide + H2O = [protein]-C-terminal L-amino acid-glycine + a 1,2-diacyl-sn-glycero-3-phosphoethanolamine</text>
        <dbReference type="Rhea" id="RHEA:67548"/>
        <dbReference type="Rhea" id="RHEA-COMP:17323"/>
        <dbReference type="Rhea" id="RHEA-COMP:17324"/>
        <dbReference type="ChEBI" id="CHEBI:15377"/>
        <dbReference type="ChEBI" id="CHEBI:64612"/>
        <dbReference type="ChEBI" id="CHEBI:172940"/>
        <dbReference type="ChEBI" id="CHEBI:172941"/>
    </reaction>
    <physiologicalReaction direction="left-to-right" evidence="1">
        <dbReference type="Rhea" id="RHEA:67549"/>
    </physiologicalReaction>
</comment>
<comment type="catalytic activity">
    <reaction evidence="1">
        <text>[protein]-C-terminal L-amino acid-glycyl-phosphatidylserine + H2O = [protein]-C-terminal L-amino acid-glycine + a 1,2-diacyl-sn-glycero-3-phospho-L-serine</text>
        <dbReference type="Rhea" id="RHEA:67576"/>
        <dbReference type="Rhea" id="RHEA-COMP:17324"/>
        <dbReference type="Rhea" id="RHEA-COMP:17326"/>
        <dbReference type="ChEBI" id="CHEBI:15377"/>
        <dbReference type="ChEBI" id="CHEBI:57262"/>
        <dbReference type="ChEBI" id="CHEBI:172940"/>
        <dbReference type="ChEBI" id="CHEBI:172942"/>
    </reaction>
    <physiologicalReaction direction="left-to-right" evidence="1">
        <dbReference type="Rhea" id="RHEA:67577"/>
    </physiologicalReaction>
</comment>
<comment type="subcellular location">
    <subcellularLocation>
        <location evidence="1">Cytoplasm</location>
    </subcellularLocation>
</comment>
<comment type="similarity">
    <text evidence="4">Belongs to the peptidase C54 family.</text>
</comment>
<accession>Q68FJ9</accession>
<gene>
    <name evidence="1" type="primary">atg4d</name>
    <name evidence="1" type="synonym">apg4d</name>
</gene>
<protein>
    <recommendedName>
        <fullName evidence="4">Cysteine protease ATG4D</fullName>
        <ecNumber evidence="1">3.4.22.-</ecNumber>
    </recommendedName>
    <alternativeName>
        <fullName evidence="1">Autophagy-related protein 4 homolog D</fullName>
        <shortName evidence="1">Autophagin-4</shortName>
    </alternativeName>
</protein>
<dbReference type="EC" id="3.4.22.-" evidence="1"/>
<dbReference type="EMBL" id="BC079754">
    <property type="protein sequence ID" value="AAH79754.1"/>
    <property type="molecule type" value="mRNA"/>
</dbReference>
<dbReference type="RefSeq" id="NP_001087417.1">
    <property type="nucleotide sequence ID" value="NM_001093948.1"/>
</dbReference>
<dbReference type="SMR" id="Q68FJ9"/>
<dbReference type="MEROPS" id="C54.005"/>
<dbReference type="DNASU" id="447241"/>
<dbReference type="AGR" id="Xenbase:XB-GENE-1016723"/>
<dbReference type="Xenbase" id="XB-GENE-1016723">
    <property type="gene designation" value="atg4d.L"/>
</dbReference>
<dbReference type="Proteomes" id="UP000186698">
    <property type="component" value="Unplaced"/>
</dbReference>
<dbReference type="Bgee" id="447241">
    <property type="expression patterns" value="Expressed in egg cell and 19 other cell types or tissues"/>
</dbReference>
<dbReference type="GO" id="GO:0005737">
    <property type="term" value="C:cytoplasm"/>
    <property type="evidence" value="ECO:0000318"/>
    <property type="project" value="GO_Central"/>
</dbReference>
<dbReference type="GO" id="GO:0004197">
    <property type="term" value="F:cysteine-type endopeptidase activity"/>
    <property type="evidence" value="ECO:0000318"/>
    <property type="project" value="GO_Central"/>
</dbReference>
<dbReference type="GO" id="GO:0008234">
    <property type="term" value="F:cysteine-type peptidase activity"/>
    <property type="evidence" value="ECO:0000250"/>
    <property type="project" value="UniProtKB"/>
</dbReference>
<dbReference type="GO" id="GO:0019786">
    <property type="term" value="F:protein-phosphatidylethanolamide deconjugating activity"/>
    <property type="evidence" value="ECO:0000318"/>
    <property type="project" value="GO_Central"/>
</dbReference>
<dbReference type="GO" id="GO:0035973">
    <property type="term" value="P:aggrephagy"/>
    <property type="evidence" value="ECO:0000318"/>
    <property type="project" value="GO_Central"/>
</dbReference>
<dbReference type="GO" id="GO:0000045">
    <property type="term" value="P:autophagosome assembly"/>
    <property type="evidence" value="ECO:0000318"/>
    <property type="project" value="GO_Central"/>
</dbReference>
<dbReference type="GO" id="GO:0006914">
    <property type="term" value="P:autophagy"/>
    <property type="evidence" value="ECO:0000250"/>
    <property type="project" value="UniProtKB"/>
</dbReference>
<dbReference type="GO" id="GO:0000423">
    <property type="term" value="P:mitophagy"/>
    <property type="evidence" value="ECO:0000250"/>
    <property type="project" value="UniProtKB"/>
</dbReference>
<dbReference type="GO" id="GO:0034727">
    <property type="term" value="P:piecemeal microautophagy of the nucleus"/>
    <property type="evidence" value="ECO:0000318"/>
    <property type="project" value="GO_Central"/>
</dbReference>
<dbReference type="GO" id="GO:0051697">
    <property type="term" value="P:protein delipidation"/>
    <property type="evidence" value="ECO:0000250"/>
    <property type="project" value="UniProtKB"/>
</dbReference>
<dbReference type="GO" id="GO:0034497">
    <property type="term" value="P:protein localization to phagophore assembly site"/>
    <property type="evidence" value="ECO:0000250"/>
    <property type="project" value="UniProtKB"/>
</dbReference>
<dbReference type="GO" id="GO:0016485">
    <property type="term" value="P:protein processing"/>
    <property type="evidence" value="ECO:0000318"/>
    <property type="project" value="GO_Central"/>
</dbReference>
<dbReference type="GO" id="GO:0015031">
    <property type="term" value="P:protein transport"/>
    <property type="evidence" value="ECO:0007669"/>
    <property type="project" value="UniProtKB-KW"/>
</dbReference>
<dbReference type="InterPro" id="IPR038765">
    <property type="entry name" value="Papain-like_cys_pep_sf"/>
</dbReference>
<dbReference type="InterPro" id="IPR005078">
    <property type="entry name" value="Peptidase_C54"/>
</dbReference>
<dbReference type="InterPro" id="IPR046792">
    <property type="entry name" value="Peptidase_C54_cat"/>
</dbReference>
<dbReference type="PANTHER" id="PTHR22624">
    <property type="entry name" value="CYSTEINE PROTEASE ATG4"/>
    <property type="match status" value="1"/>
</dbReference>
<dbReference type="PANTHER" id="PTHR22624:SF36">
    <property type="entry name" value="CYSTEINE PROTEASE ATG4D"/>
    <property type="match status" value="1"/>
</dbReference>
<dbReference type="Pfam" id="PF03416">
    <property type="entry name" value="Peptidase_C54"/>
    <property type="match status" value="1"/>
</dbReference>
<dbReference type="SUPFAM" id="SSF54001">
    <property type="entry name" value="Cysteine proteinases"/>
    <property type="match status" value="1"/>
</dbReference>
<evidence type="ECO:0000250" key="1">
    <source>
        <dbReference type="UniProtKB" id="Q86TL0"/>
    </source>
</evidence>
<evidence type="ECO:0000250" key="2">
    <source>
        <dbReference type="UniProtKB" id="Q9Y4P1"/>
    </source>
</evidence>
<evidence type="ECO:0000256" key="3">
    <source>
        <dbReference type="SAM" id="MobiDB-lite"/>
    </source>
</evidence>
<evidence type="ECO:0000305" key="4"/>
<proteinExistence type="evidence at transcript level"/>
<organism>
    <name type="scientific">Xenopus laevis</name>
    <name type="common">African clawed frog</name>
    <dbReference type="NCBI Taxonomy" id="8355"/>
    <lineage>
        <taxon>Eukaryota</taxon>
        <taxon>Metazoa</taxon>
        <taxon>Chordata</taxon>
        <taxon>Craniata</taxon>
        <taxon>Vertebrata</taxon>
        <taxon>Euteleostomi</taxon>
        <taxon>Amphibia</taxon>
        <taxon>Batrachia</taxon>
        <taxon>Anura</taxon>
        <taxon>Pipoidea</taxon>
        <taxon>Pipidae</taxon>
        <taxon>Xenopodinae</taxon>
        <taxon>Xenopus</taxon>
        <taxon>Xenopus</taxon>
    </lineage>
</organism>
<reference key="1">
    <citation type="submission" date="2004-06" db="EMBL/GenBank/DDBJ databases">
        <authorList>
            <consortium name="NIH - Xenopus Gene Collection (XGC) project"/>
        </authorList>
    </citation>
    <scope>NUCLEOTIDE SEQUENCE [LARGE SCALE MRNA]</scope>
    <source>
        <tissue>Brain</tissue>
    </source>
</reference>
<name>ATG4D_XENLA</name>
<keyword id="KW-0072">Autophagy</keyword>
<keyword id="KW-0963">Cytoplasm</keyword>
<keyword id="KW-0378">Hydrolase</keyword>
<keyword id="KW-0645">Protease</keyword>
<keyword id="KW-0653">Protein transport</keyword>
<keyword id="KW-1185">Reference proteome</keyword>
<keyword id="KW-0788">Thiol protease</keyword>
<keyword id="KW-0813">Transport</keyword>
<keyword id="KW-0833">Ubl conjugation pathway</keyword>